<gene>
    <name type="primary">gacK</name>
    <name type="ORF">DDB_G0285915</name>
</gene>
<feature type="signal peptide" evidence="2">
    <location>
        <begin position="1"/>
        <end position="20"/>
    </location>
</feature>
<feature type="chain" id="PRO_0000380209" description="Rho GTPase-activating protein gacK">
    <location>
        <begin position="21"/>
        <end position="970"/>
    </location>
</feature>
<feature type="domain" description="Rho-GAP" evidence="3">
    <location>
        <begin position="754"/>
        <end position="970"/>
    </location>
</feature>
<feature type="region of interest" description="Disordered" evidence="4">
    <location>
        <begin position="30"/>
        <end position="49"/>
    </location>
</feature>
<feature type="region of interest" description="Disordered" evidence="4">
    <location>
        <begin position="258"/>
        <end position="285"/>
    </location>
</feature>
<feature type="region of interest" description="Disordered" evidence="4">
    <location>
        <begin position="312"/>
        <end position="446"/>
    </location>
</feature>
<feature type="region of interest" description="Disordered" evidence="4">
    <location>
        <begin position="487"/>
        <end position="550"/>
    </location>
</feature>
<feature type="region of interest" description="Disordered" evidence="4">
    <location>
        <begin position="860"/>
        <end position="886"/>
    </location>
</feature>
<feature type="compositionally biased region" description="Low complexity" evidence="4">
    <location>
        <begin position="35"/>
        <end position="49"/>
    </location>
</feature>
<feature type="compositionally biased region" description="Low complexity" evidence="4">
    <location>
        <begin position="258"/>
        <end position="269"/>
    </location>
</feature>
<feature type="compositionally biased region" description="Pro residues" evidence="4">
    <location>
        <begin position="321"/>
        <end position="333"/>
    </location>
</feature>
<feature type="compositionally biased region" description="Low complexity" evidence="4">
    <location>
        <begin position="334"/>
        <end position="383"/>
    </location>
</feature>
<feature type="compositionally biased region" description="Polar residues" evidence="4">
    <location>
        <begin position="392"/>
        <end position="406"/>
    </location>
</feature>
<feature type="compositionally biased region" description="Low complexity" evidence="4">
    <location>
        <begin position="407"/>
        <end position="426"/>
    </location>
</feature>
<feature type="compositionally biased region" description="Polar residues" evidence="4">
    <location>
        <begin position="427"/>
        <end position="446"/>
    </location>
</feature>
<feature type="compositionally biased region" description="Low complexity" evidence="4">
    <location>
        <begin position="860"/>
        <end position="885"/>
    </location>
</feature>
<feature type="site" description="Arginine finger; crucial for GTP hydrolysis by stabilizing the transition state" evidence="3">
    <location>
        <position position="795"/>
    </location>
</feature>
<evidence type="ECO:0000250" key="1"/>
<evidence type="ECO:0000255" key="2"/>
<evidence type="ECO:0000255" key="3">
    <source>
        <dbReference type="PROSITE-ProRule" id="PRU00172"/>
    </source>
</evidence>
<evidence type="ECO:0000256" key="4">
    <source>
        <dbReference type="SAM" id="MobiDB-lite"/>
    </source>
</evidence>
<sequence>MTLVYEKSSFVLIMAQIAEAQNIMTRSTSSNDLLSTSAGSPPSPTSAAILLSSSPSPTITIASLPSGLNIVSNPNGNPAINVVLLNVNLNKEEEKMTLGQLLACFPEVPSNIPIQLNPNQHKLRRDTIVSQPVITSKQSSLFETSKQSNIPLSASVTNLQTLNKEKENYNLLNSSTNSLHSLIITPPTSNNTSSNNFVGGNIINSSSEDSILPPPHIITTTTTTTTSLPPRSPMPLPSSNCINIPNNINIPDNISESSTCSLSSNASNNYPQSPPKYNNFEINQNNNNSISLSKSQSLDNILTNSNNNNNNEITISSNIPIPLPPQSSSPPPTRNNQSSPSPSSPQQQNIMPTPPSTSLTPPQSPTLSPSSSTHSTPTQTTTTIKLPPSSPPSTISQNNARKTQIPTTTTTTTTTTTTTSTTSTTSPNPVVNNKNLNTPSSSFSPTKRLTIAFGSLTRSSNTPPPESSIVPIRWEINLNQIKIASTSTSNTNTVSSQNLINSSNTNNNNNNNNNNNNNNNNNNNNNNNNNNNNNSGNNNNNNNNNNNNNNQLYEQYYKLCKGEFQQNTSLYNKTFNQLLDVDINTSLSLLDKCYDSILKSNGIGLLSSKDQYLSTQSKEKDPNRVKSLLSVVKNAVSEDILNVKPSKTMLYFSNFGKTIPINLEVIDECILNNFSSKKVKFKVLMGPPSKTHTINVSEKEGFIGKKSSITLNFSLILKSSIKLRRVVIIEIEGGVRYFILVQVESNKTAFGQPIEDSELVEDNTSFGPMLVPRALVILKQAFFGCNAHLTESIFRLPPANDSEYNIVKDRVNREAIGTTEPHCIATLIKVFFRELPNLLLNDIDPEIFLNFKPTAQSADTASSAATANSSSSGSGNGNSSPNNDDPTMDPVFIVNLIEEKRRSTFLWLVDLLAEVTKFESSNKMNSKSLSIIFSPNLYFAPSICSAENSFAISGKVVSFILELIQFNKSL</sequence>
<protein>
    <recommendedName>
        <fullName>Rho GTPase-activating protein gacK</fullName>
    </recommendedName>
    <alternativeName>
        <fullName>GTPase activating factor for raC protein K</fullName>
    </alternativeName>
</protein>
<organism>
    <name type="scientific">Dictyostelium discoideum</name>
    <name type="common">Social amoeba</name>
    <dbReference type="NCBI Taxonomy" id="44689"/>
    <lineage>
        <taxon>Eukaryota</taxon>
        <taxon>Amoebozoa</taxon>
        <taxon>Evosea</taxon>
        <taxon>Eumycetozoa</taxon>
        <taxon>Dictyostelia</taxon>
        <taxon>Dictyosteliales</taxon>
        <taxon>Dictyosteliaceae</taxon>
        <taxon>Dictyostelium</taxon>
    </lineage>
</organism>
<accession>Q54MI9</accession>
<dbReference type="EMBL" id="AAFI02000082">
    <property type="protein sequence ID" value="EAL64492.1"/>
    <property type="molecule type" value="Genomic_DNA"/>
</dbReference>
<dbReference type="RefSeq" id="XP_638001.1">
    <property type="nucleotide sequence ID" value="XM_632909.1"/>
</dbReference>
<dbReference type="SMR" id="Q54MI9"/>
<dbReference type="FunCoup" id="Q54MI9">
    <property type="interactions" value="744"/>
</dbReference>
<dbReference type="GlyGen" id="Q54MI9">
    <property type="glycosylation" value="2 sites"/>
</dbReference>
<dbReference type="PaxDb" id="44689-DDB0233878"/>
<dbReference type="EnsemblProtists" id="EAL64492">
    <property type="protein sequence ID" value="EAL64492"/>
    <property type="gene ID" value="DDB_G0285915"/>
</dbReference>
<dbReference type="GeneID" id="8625352"/>
<dbReference type="KEGG" id="ddi:DDB_G0285915"/>
<dbReference type="dictyBase" id="DDB_G0285915">
    <property type="gene designation" value="gacK"/>
</dbReference>
<dbReference type="VEuPathDB" id="AmoebaDB:DDB_G0285915"/>
<dbReference type="eggNOG" id="KOG4270">
    <property type="taxonomic scope" value="Eukaryota"/>
</dbReference>
<dbReference type="HOGENOM" id="CLU_305755_0_0_1"/>
<dbReference type="InParanoid" id="Q54MI9"/>
<dbReference type="OMA" id="VKFKVLM"/>
<dbReference type="PRO" id="PR:Q54MI9"/>
<dbReference type="Proteomes" id="UP000002195">
    <property type="component" value="Chromosome 4"/>
</dbReference>
<dbReference type="GO" id="GO:0005737">
    <property type="term" value="C:cytoplasm"/>
    <property type="evidence" value="ECO:0007669"/>
    <property type="project" value="UniProtKB-SubCell"/>
</dbReference>
<dbReference type="GO" id="GO:0005096">
    <property type="term" value="F:GTPase activator activity"/>
    <property type="evidence" value="ECO:0007669"/>
    <property type="project" value="UniProtKB-KW"/>
</dbReference>
<dbReference type="GO" id="GO:0007165">
    <property type="term" value="P:signal transduction"/>
    <property type="evidence" value="ECO:0007669"/>
    <property type="project" value="InterPro"/>
</dbReference>
<dbReference type="CDD" id="cd00159">
    <property type="entry name" value="RhoGAP"/>
    <property type="match status" value="1"/>
</dbReference>
<dbReference type="Gene3D" id="1.10.555.10">
    <property type="entry name" value="Rho GTPase activation protein"/>
    <property type="match status" value="1"/>
</dbReference>
<dbReference type="InterPro" id="IPR008936">
    <property type="entry name" value="Rho_GTPase_activation_prot"/>
</dbReference>
<dbReference type="InterPro" id="IPR000198">
    <property type="entry name" value="RhoGAP_dom"/>
</dbReference>
<dbReference type="InterPro" id="IPR044785">
    <property type="entry name" value="RopGAP1-5"/>
</dbReference>
<dbReference type="PANTHER" id="PTHR23177">
    <property type="entry name" value="MKIAA1688 PROTEIN"/>
    <property type="match status" value="1"/>
</dbReference>
<dbReference type="PANTHER" id="PTHR23177:SF58">
    <property type="entry name" value="RHO GTPASE-ACTIVATING PROTEIN GACK"/>
    <property type="match status" value="1"/>
</dbReference>
<dbReference type="Pfam" id="PF00620">
    <property type="entry name" value="RhoGAP"/>
    <property type="match status" value="1"/>
</dbReference>
<dbReference type="SMART" id="SM00324">
    <property type="entry name" value="RhoGAP"/>
    <property type="match status" value="1"/>
</dbReference>
<dbReference type="SUPFAM" id="SSF48350">
    <property type="entry name" value="GTPase activation domain, GAP"/>
    <property type="match status" value="1"/>
</dbReference>
<dbReference type="PROSITE" id="PS50238">
    <property type="entry name" value="RHOGAP"/>
    <property type="match status" value="1"/>
</dbReference>
<keyword id="KW-0963">Cytoplasm</keyword>
<keyword id="KW-0343">GTPase activation</keyword>
<keyword id="KW-1185">Reference proteome</keyword>
<keyword id="KW-0732">Signal</keyword>
<reference key="1">
    <citation type="journal article" date="2005" name="Nature">
        <title>The genome of the social amoeba Dictyostelium discoideum.</title>
        <authorList>
            <person name="Eichinger L."/>
            <person name="Pachebat J.A."/>
            <person name="Gloeckner G."/>
            <person name="Rajandream M.A."/>
            <person name="Sucgang R."/>
            <person name="Berriman M."/>
            <person name="Song J."/>
            <person name="Olsen R."/>
            <person name="Szafranski K."/>
            <person name="Xu Q."/>
            <person name="Tunggal B."/>
            <person name="Kummerfeld S."/>
            <person name="Madera M."/>
            <person name="Konfortov B.A."/>
            <person name="Rivero F."/>
            <person name="Bankier A.T."/>
            <person name="Lehmann R."/>
            <person name="Hamlin N."/>
            <person name="Davies R."/>
            <person name="Gaudet P."/>
            <person name="Fey P."/>
            <person name="Pilcher K."/>
            <person name="Chen G."/>
            <person name="Saunders D."/>
            <person name="Sodergren E.J."/>
            <person name="Davis P."/>
            <person name="Kerhornou A."/>
            <person name="Nie X."/>
            <person name="Hall N."/>
            <person name="Anjard C."/>
            <person name="Hemphill L."/>
            <person name="Bason N."/>
            <person name="Farbrother P."/>
            <person name="Desany B."/>
            <person name="Just E."/>
            <person name="Morio T."/>
            <person name="Rost R."/>
            <person name="Churcher C.M."/>
            <person name="Cooper J."/>
            <person name="Haydock S."/>
            <person name="van Driessche N."/>
            <person name="Cronin A."/>
            <person name="Goodhead I."/>
            <person name="Muzny D.M."/>
            <person name="Mourier T."/>
            <person name="Pain A."/>
            <person name="Lu M."/>
            <person name="Harper D."/>
            <person name="Lindsay R."/>
            <person name="Hauser H."/>
            <person name="James K.D."/>
            <person name="Quiles M."/>
            <person name="Madan Babu M."/>
            <person name="Saito T."/>
            <person name="Buchrieser C."/>
            <person name="Wardroper A."/>
            <person name="Felder M."/>
            <person name="Thangavelu M."/>
            <person name="Johnson D."/>
            <person name="Knights A."/>
            <person name="Loulseged H."/>
            <person name="Mungall K.L."/>
            <person name="Oliver K."/>
            <person name="Price C."/>
            <person name="Quail M.A."/>
            <person name="Urushihara H."/>
            <person name="Hernandez J."/>
            <person name="Rabbinowitsch E."/>
            <person name="Steffen D."/>
            <person name="Sanders M."/>
            <person name="Ma J."/>
            <person name="Kohara Y."/>
            <person name="Sharp S."/>
            <person name="Simmonds M.N."/>
            <person name="Spiegler S."/>
            <person name="Tivey A."/>
            <person name="Sugano S."/>
            <person name="White B."/>
            <person name="Walker D."/>
            <person name="Woodward J.R."/>
            <person name="Winckler T."/>
            <person name="Tanaka Y."/>
            <person name="Shaulsky G."/>
            <person name="Schleicher M."/>
            <person name="Weinstock G.M."/>
            <person name="Rosenthal A."/>
            <person name="Cox E.C."/>
            <person name="Chisholm R.L."/>
            <person name="Gibbs R.A."/>
            <person name="Loomis W.F."/>
            <person name="Platzer M."/>
            <person name="Kay R.R."/>
            <person name="Williams J.G."/>
            <person name="Dear P.H."/>
            <person name="Noegel A.A."/>
            <person name="Barrell B.G."/>
            <person name="Kuspa A."/>
        </authorList>
    </citation>
    <scope>NUCLEOTIDE SEQUENCE [LARGE SCALE GENOMIC DNA]</scope>
    <source>
        <strain>AX4</strain>
    </source>
</reference>
<name>GACK_DICDI</name>
<comment type="function">
    <text evidence="1">Rho GTPase-activating protein involved in the signal transduction pathway.</text>
</comment>
<comment type="subcellular location">
    <subcellularLocation>
        <location evidence="1">Cytoplasm</location>
    </subcellularLocation>
</comment>
<proteinExistence type="inferred from homology"/>